<reference key="1">
    <citation type="journal article" date="1994" name="Nucleic Acids Res.">
        <title>Analysis of the Escherichia coli genome. V. DNA sequence of the region from 76.0 to 81.5 minutes.</title>
        <authorList>
            <person name="Sofia H.J."/>
            <person name="Burland V."/>
            <person name="Daniels D.L."/>
            <person name="Plunkett G. III"/>
            <person name="Blattner F.R."/>
        </authorList>
    </citation>
    <scope>NUCLEOTIDE SEQUENCE [LARGE SCALE GENOMIC DNA]</scope>
    <source>
        <strain>K12 / MG1655 / ATCC 47076</strain>
    </source>
</reference>
<reference key="2">
    <citation type="journal article" date="1997" name="Science">
        <title>The complete genome sequence of Escherichia coli K-12.</title>
        <authorList>
            <person name="Blattner F.R."/>
            <person name="Plunkett G. III"/>
            <person name="Bloch C.A."/>
            <person name="Perna N.T."/>
            <person name="Burland V."/>
            <person name="Riley M."/>
            <person name="Collado-Vides J."/>
            <person name="Glasner J.D."/>
            <person name="Rode C.K."/>
            <person name="Mayhew G.F."/>
            <person name="Gregor J."/>
            <person name="Davis N.W."/>
            <person name="Kirkpatrick H.A."/>
            <person name="Goeden M.A."/>
            <person name="Rose D.J."/>
            <person name="Mau B."/>
            <person name="Shao Y."/>
        </authorList>
    </citation>
    <scope>NUCLEOTIDE SEQUENCE [LARGE SCALE GENOMIC DNA]</scope>
    <source>
        <strain>K12 / MG1655 / ATCC 47076</strain>
    </source>
</reference>
<reference key="3">
    <citation type="journal article" date="2006" name="Mol. Syst. Biol.">
        <title>Highly accurate genome sequences of Escherichia coli K-12 strains MG1655 and W3110.</title>
        <authorList>
            <person name="Hayashi K."/>
            <person name="Morooka N."/>
            <person name="Yamamoto Y."/>
            <person name="Fujita K."/>
            <person name="Isono K."/>
            <person name="Choi S."/>
            <person name="Ohtsubo E."/>
            <person name="Baba T."/>
            <person name="Wanner B.L."/>
            <person name="Mori H."/>
            <person name="Horiuchi T."/>
        </authorList>
    </citation>
    <scope>NUCLEOTIDE SEQUENCE [LARGE SCALE GENOMIC DNA]</scope>
    <source>
        <strain>K12 / W3110 / ATCC 27325 / DSM 5911</strain>
    </source>
</reference>
<reference key="4">
    <citation type="journal article" date="2005" name="Science">
        <title>Global topology analysis of the Escherichia coli inner membrane proteome.</title>
        <authorList>
            <person name="Daley D.O."/>
            <person name="Rapp M."/>
            <person name="Granseth E."/>
            <person name="Melen K."/>
            <person name="Drew D."/>
            <person name="von Heijne G."/>
        </authorList>
    </citation>
    <scope>TOPOLOGY [LARGE SCALE ANALYSIS]</scope>
    <source>
        <strain>K12 / MG1655 / ATCC 47076</strain>
    </source>
</reference>
<organism>
    <name type="scientific">Escherichia coli (strain K12)</name>
    <dbReference type="NCBI Taxonomy" id="83333"/>
    <lineage>
        <taxon>Bacteria</taxon>
        <taxon>Pseudomonadati</taxon>
        <taxon>Pseudomonadota</taxon>
        <taxon>Gammaproteobacteria</taxon>
        <taxon>Enterobacterales</taxon>
        <taxon>Enterobacteriaceae</taxon>
        <taxon>Escherichia</taxon>
    </lineage>
</organism>
<evidence type="ECO:0000255" key="1"/>
<evidence type="ECO:0000305" key="2"/>
<comment type="subcellular location">
    <subcellularLocation>
        <location>Cell inner membrane</location>
        <topology>Multi-pass membrane protein</topology>
    </subcellularLocation>
</comment>
<comment type="similarity">
    <text evidence="2">Belongs to the autoinducer-2 exporter (AI-2E) (TC 2.A.86) family.</text>
</comment>
<comment type="sequence caution" evidence="2">
    <conflict type="erroneous initiation">
        <sequence resource="EMBL-CDS" id="AAB18449"/>
    </conflict>
    <text>Extended N-terminus.</text>
</comment>
<gene>
    <name type="primary">yhhT</name>
    <name type="ordered locus">b3474</name>
    <name type="ordered locus">JW5680</name>
</gene>
<protein>
    <recommendedName>
        <fullName>Putative transport protein YhhT</fullName>
    </recommendedName>
</protein>
<feature type="chain" id="PRO_0000148301" description="Putative transport protein YhhT">
    <location>
        <begin position="1"/>
        <end position="349"/>
    </location>
</feature>
<feature type="topological domain" description="Cytoplasmic" evidence="1">
    <location>
        <begin position="1"/>
        <end position="10"/>
    </location>
</feature>
<feature type="transmembrane region" description="Helical" evidence="1">
    <location>
        <begin position="11"/>
        <end position="31"/>
    </location>
</feature>
<feature type="topological domain" description="Periplasmic" evidence="1">
    <location>
        <position position="32"/>
    </location>
</feature>
<feature type="transmembrane region" description="Helical" evidence="1">
    <location>
        <begin position="33"/>
        <end position="53"/>
    </location>
</feature>
<feature type="topological domain" description="Cytoplasmic" evidence="1">
    <location>
        <begin position="54"/>
        <end position="62"/>
    </location>
</feature>
<feature type="transmembrane region" description="Helical" evidence="1">
    <location>
        <begin position="63"/>
        <end position="83"/>
    </location>
</feature>
<feature type="topological domain" description="Periplasmic" evidence="1">
    <location>
        <begin position="84"/>
        <end position="142"/>
    </location>
</feature>
<feature type="transmembrane region" description="Helical" evidence="1">
    <location>
        <begin position="143"/>
        <end position="163"/>
    </location>
</feature>
<feature type="topological domain" description="Cytoplasmic" evidence="1">
    <location>
        <begin position="164"/>
        <end position="208"/>
    </location>
</feature>
<feature type="transmembrane region" description="Helical" evidence="1">
    <location>
        <begin position="209"/>
        <end position="229"/>
    </location>
</feature>
<feature type="topological domain" description="Periplasmic" evidence="1">
    <location>
        <begin position="230"/>
        <end position="234"/>
    </location>
</feature>
<feature type="transmembrane region" description="Helical" evidence="1">
    <location>
        <begin position="235"/>
        <end position="255"/>
    </location>
</feature>
<feature type="topological domain" description="Cytoplasmic" evidence="1">
    <location>
        <begin position="256"/>
        <end position="257"/>
    </location>
</feature>
<feature type="transmembrane region" description="Helical" evidence="1">
    <location>
        <begin position="258"/>
        <end position="278"/>
    </location>
</feature>
<feature type="topological domain" description="Periplasmic" evidence="1">
    <location>
        <begin position="279"/>
        <end position="292"/>
    </location>
</feature>
<feature type="transmembrane region" description="Helical" evidence="1">
    <location>
        <begin position="293"/>
        <end position="313"/>
    </location>
</feature>
<feature type="topological domain" description="Cytoplasmic" evidence="1">
    <location>
        <begin position="314"/>
        <end position="349"/>
    </location>
</feature>
<proteinExistence type="evidence at protein level"/>
<accession>P0AGM0</accession>
<accession>P37622</accession>
<accession>P76700</accession>
<accession>Q2M7D7</accession>
<accession>Q8X6P3</accession>
<name>YHHT_ECOLI</name>
<sequence>METPQPDKTGMHILLKLASLVVILAGIHAAADIIVQLLLALFFAIVLNPLVTWFIRRGVQRPVAITIVVVVMLIALTALVGVLAASFNEFISMLPKFNKELTRKLFKLQEMLPFLNLHMSPERMLQRMDSEKVVTFTTALMTGLSGAMASVLLLVMTVVFMLFEVRHVPYKMRFALNNPQIHIAGLHRALKGVSHYLALKTLLSLWTGVIVWLGLELMGVQFALMWAVLAFLLNYVPNIGAVISAVPPMIQVLLFNGVYECILVGALFLVVHMVIGNILEPRMMGHRLGMSTMVVFLSLLIWGWLLGPVGMLLSVPLTSVCKIWMETTKGGSKLAILLGPGRPKSRLPG</sequence>
<keyword id="KW-0997">Cell inner membrane</keyword>
<keyword id="KW-1003">Cell membrane</keyword>
<keyword id="KW-0472">Membrane</keyword>
<keyword id="KW-1185">Reference proteome</keyword>
<keyword id="KW-0812">Transmembrane</keyword>
<keyword id="KW-1133">Transmembrane helix</keyword>
<keyword id="KW-0813">Transport</keyword>
<dbReference type="EMBL" id="U00039">
    <property type="protein sequence ID" value="AAB18449.1"/>
    <property type="status" value="ALT_INIT"/>
    <property type="molecule type" value="Genomic_DNA"/>
</dbReference>
<dbReference type="EMBL" id="U00096">
    <property type="protein sequence ID" value="AAC76499.2"/>
    <property type="molecule type" value="Genomic_DNA"/>
</dbReference>
<dbReference type="EMBL" id="AP009048">
    <property type="protein sequence ID" value="BAE77819.1"/>
    <property type="molecule type" value="Genomic_DNA"/>
</dbReference>
<dbReference type="PIR" id="S47693">
    <property type="entry name" value="S47693"/>
</dbReference>
<dbReference type="RefSeq" id="NP_417931.4">
    <property type="nucleotide sequence ID" value="NC_000913.3"/>
</dbReference>
<dbReference type="RefSeq" id="WP_001300885.1">
    <property type="nucleotide sequence ID" value="NZ_SSZK01000008.1"/>
</dbReference>
<dbReference type="SMR" id="P0AGM0"/>
<dbReference type="BioGRID" id="4262490">
    <property type="interactions" value="7"/>
</dbReference>
<dbReference type="FunCoup" id="P0AGM0">
    <property type="interactions" value="497"/>
</dbReference>
<dbReference type="STRING" id="511145.b3474"/>
<dbReference type="TCDB" id="2.A.86.1.2">
    <property type="family name" value="the autoinducer-2 exporter (ai-2e) family (formerly the perm family, tc #9,b,22)"/>
</dbReference>
<dbReference type="PaxDb" id="511145-b3474"/>
<dbReference type="EnsemblBacteria" id="AAC76499">
    <property type="protein sequence ID" value="AAC76499"/>
    <property type="gene ID" value="b3474"/>
</dbReference>
<dbReference type="GeneID" id="947980"/>
<dbReference type="KEGG" id="ecj:JW5680"/>
<dbReference type="KEGG" id="eco:b3474"/>
<dbReference type="KEGG" id="ecoc:C3026_18815"/>
<dbReference type="PATRIC" id="fig|511145.12.peg.3573"/>
<dbReference type="EchoBASE" id="EB2134"/>
<dbReference type="eggNOG" id="COG0628">
    <property type="taxonomic scope" value="Bacteria"/>
</dbReference>
<dbReference type="HOGENOM" id="CLU_031275_0_3_6"/>
<dbReference type="InParanoid" id="P0AGM0"/>
<dbReference type="OMA" id="LNPIWIF"/>
<dbReference type="OrthoDB" id="9799225at2"/>
<dbReference type="PhylomeDB" id="P0AGM0"/>
<dbReference type="BioCyc" id="EcoCyc:EG12220-MONOMER"/>
<dbReference type="PRO" id="PR:P0AGM0"/>
<dbReference type="Proteomes" id="UP000000625">
    <property type="component" value="Chromosome"/>
</dbReference>
<dbReference type="GO" id="GO:0005886">
    <property type="term" value="C:plasma membrane"/>
    <property type="evidence" value="ECO:0000314"/>
    <property type="project" value="EcoCyc"/>
</dbReference>
<dbReference type="GO" id="GO:0055085">
    <property type="term" value="P:transmembrane transport"/>
    <property type="evidence" value="ECO:0000318"/>
    <property type="project" value="GO_Central"/>
</dbReference>
<dbReference type="InterPro" id="IPR002549">
    <property type="entry name" value="AI-2E-like"/>
</dbReference>
<dbReference type="NCBIfam" id="NF008930">
    <property type="entry name" value="PRK12287.1"/>
    <property type="match status" value="1"/>
</dbReference>
<dbReference type="PANTHER" id="PTHR21716">
    <property type="entry name" value="TRANSMEMBRANE PROTEIN"/>
    <property type="match status" value="1"/>
</dbReference>
<dbReference type="PANTHER" id="PTHR21716:SF21">
    <property type="entry name" value="TRANSPORT PROTEIN YHHT-RELATED"/>
    <property type="match status" value="1"/>
</dbReference>
<dbReference type="Pfam" id="PF01594">
    <property type="entry name" value="AI-2E_transport"/>
    <property type="match status" value="1"/>
</dbReference>